<protein>
    <recommendedName>
        <fullName evidence="1">Large ribosomal subunit protein uL14c</fullName>
    </recommendedName>
    <alternativeName>
        <fullName evidence="2">50S ribosomal protein L14, chloroplastic</fullName>
    </alternativeName>
</protein>
<comment type="function">
    <text evidence="1">Binds to 23S rRNA.</text>
</comment>
<comment type="subunit">
    <text evidence="1">Part of the 50S ribosomal subunit.</text>
</comment>
<comment type="subcellular location">
    <subcellularLocation>
        <location>Plastid</location>
        <location>Chloroplast</location>
    </subcellularLocation>
</comment>
<comment type="similarity">
    <text evidence="1">Belongs to the universal ribosomal protein uL14 family.</text>
</comment>
<organism>
    <name type="scientific">Emiliania huxleyi</name>
    <name type="common">Coccolithophore</name>
    <name type="synonym">Pontosphaera huxleyi</name>
    <dbReference type="NCBI Taxonomy" id="2903"/>
    <lineage>
        <taxon>Eukaryota</taxon>
        <taxon>Haptista</taxon>
        <taxon>Haptophyta</taxon>
        <taxon>Prymnesiophyceae</taxon>
        <taxon>Isochrysidales</taxon>
        <taxon>Noelaerhabdaceae</taxon>
        <taxon>Emiliania</taxon>
    </lineage>
</organism>
<dbReference type="EMBL" id="AY741371">
    <property type="protein sequence ID" value="AAX13910.1"/>
    <property type="molecule type" value="Genomic_DNA"/>
</dbReference>
<dbReference type="RefSeq" id="YP_277411.1">
    <property type="nucleotide sequence ID" value="NC_007288.1"/>
</dbReference>
<dbReference type="SMR" id="Q4G356"/>
<dbReference type="STRING" id="2903.Q4G356"/>
<dbReference type="GeneID" id="3562495"/>
<dbReference type="GO" id="GO:0009507">
    <property type="term" value="C:chloroplast"/>
    <property type="evidence" value="ECO:0007669"/>
    <property type="project" value="UniProtKB-SubCell"/>
</dbReference>
<dbReference type="GO" id="GO:0022625">
    <property type="term" value="C:cytosolic large ribosomal subunit"/>
    <property type="evidence" value="ECO:0007669"/>
    <property type="project" value="TreeGrafter"/>
</dbReference>
<dbReference type="GO" id="GO:0070180">
    <property type="term" value="F:large ribosomal subunit rRNA binding"/>
    <property type="evidence" value="ECO:0007669"/>
    <property type="project" value="TreeGrafter"/>
</dbReference>
<dbReference type="GO" id="GO:0003735">
    <property type="term" value="F:structural constituent of ribosome"/>
    <property type="evidence" value="ECO:0007669"/>
    <property type="project" value="InterPro"/>
</dbReference>
<dbReference type="GO" id="GO:0006412">
    <property type="term" value="P:translation"/>
    <property type="evidence" value="ECO:0007669"/>
    <property type="project" value="UniProtKB-UniRule"/>
</dbReference>
<dbReference type="CDD" id="cd00337">
    <property type="entry name" value="Ribosomal_uL14"/>
    <property type="match status" value="1"/>
</dbReference>
<dbReference type="FunFam" id="2.40.150.20:FF:000001">
    <property type="entry name" value="50S ribosomal protein L14"/>
    <property type="match status" value="1"/>
</dbReference>
<dbReference type="Gene3D" id="2.40.150.20">
    <property type="entry name" value="Ribosomal protein L14"/>
    <property type="match status" value="1"/>
</dbReference>
<dbReference type="HAMAP" id="MF_01367">
    <property type="entry name" value="Ribosomal_uL14"/>
    <property type="match status" value="1"/>
</dbReference>
<dbReference type="InterPro" id="IPR000218">
    <property type="entry name" value="Ribosomal_uL14"/>
</dbReference>
<dbReference type="InterPro" id="IPR005745">
    <property type="entry name" value="Ribosomal_uL14_bac-type"/>
</dbReference>
<dbReference type="InterPro" id="IPR019972">
    <property type="entry name" value="Ribosomal_uL14_CS"/>
</dbReference>
<dbReference type="InterPro" id="IPR036853">
    <property type="entry name" value="Ribosomal_uL14_sf"/>
</dbReference>
<dbReference type="NCBIfam" id="TIGR01067">
    <property type="entry name" value="rplN_bact"/>
    <property type="match status" value="1"/>
</dbReference>
<dbReference type="PANTHER" id="PTHR11761">
    <property type="entry name" value="50S/60S RIBOSOMAL PROTEIN L14/L23"/>
    <property type="match status" value="1"/>
</dbReference>
<dbReference type="PANTHER" id="PTHR11761:SF3">
    <property type="entry name" value="LARGE RIBOSOMAL SUBUNIT PROTEIN UL14M"/>
    <property type="match status" value="1"/>
</dbReference>
<dbReference type="Pfam" id="PF00238">
    <property type="entry name" value="Ribosomal_L14"/>
    <property type="match status" value="1"/>
</dbReference>
<dbReference type="SMART" id="SM01374">
    <property type="entry name" value="Ribosomal_L14"/>
    <property type="match status" value="1"/>
</dbReference>
<dbReference type="SUPFAM" id="SSF50193">
    <property type="entry name" value="Ribosomal protein L14"/>
    <property type="match status" value="1"/>
</dbReference>
<dbReference type="PROSITE" id="PS00049">
    <property type="entry name" value="RIBOSOMAL_L14"/>
    <property type="match status" value="1"/>
</dbReference>
<geneLocation type="chloroplast"/>
<gene>
    <name evidence="1" type="primary">rpl14</name>
</gene>
<evidence type="ECO:0000255" key="1">
    <source>
        <dbReference type="HAMAP-Rule" id="MF_01367"/>
    </source>
</evidence>
<evidence type="ECO:0000305" key="2"/>
<feature type="chain" id="PRO_0000276372" description="Large ribosomal subunit protein uL14c">
    <location>
        <begin position="1"/>
        <end position="121"/>
    </location>
</feature>
<keyword id="KW-0150">Chloroplast</keyword>
<keyword id="KW-0934">Plastid</keyword>
<keyword id="KW-0687">Ribonucleoprotein</keyword>
<keyword id="KW-0689">Ribosomal protein</keyword>
<keyword id="KW-0694">RNA-binding</keyword>
<keyword id="KW-0699">rRNA-binding</keyword>
<accession>Q4G356</accession>
<reference key="1">
    <citation type="journal article" date="2005" name="DNA Res.">
        <title>The complete plastid genome sequence of the haptophyte Emiliania huxleyi: a comparison to other plastid genomes.</title>
        <authorList>
            <person name="Sanchez-Puerta M.V."/>
            <person name="Bachvaroff T.R."/>
            <person name="Delwiche C.F."/>
        </authorList>
    </citation>
    <scope>NUCLEOTIDE SEQUENCE [LARGE SCALE GENOMIC DNA]</scope>
    <source>
        <strain>CCMP373 / CSIRO-CS-57 / BT6</strain>
    </source>
</reference>
<name>RK14_EMIHU</name>
<sequence>MIQPQTCLNVADNSGAKKLMCIRVLGTNRRYGHVGDVIIGVVKDATPNLTVKRSDVVRAVIVRTKQSIRRKDGSRLRFDDNATVIINKENNPRGTRVFGPIARELKDNGFTKIVSLAPEVL</sequence>
<proteinExistence type="inferred from homology"/>